<keyword id="KW-0002">3D-structure</keyword>
<keyword id="KW-0027">Amidation</keyword>
<keyword id="KW-0044">Antibiotic</keyword>
<keyword id="KW-0929">Antimicrobial</keyword>
<keyword id="KW-0903">Direct protein sequencing</keyword>
<keyword id="KW-1015">Disulfide bond</keyword>
<keyword id="KW-1185">Reference proteome</keyword>
<keyword id="KW-0964">Secreted</keyword>
<keyword id="KW-0732">Signal</keyword>
<feature type="signal peptide" evidence="2">
    <location>
        <begin position="1"/>
        <end position="29"/>
    </location>
</feature>
<feature type="propeptide" id="PRO_0000004746" evidence="4">
    <location>
        <begin position="30"/>
        <end position="130"/>
    </location>
</feature>
<feature type="peptide" id="PRO_0000004747" description="Protegrin-2">
    <location>
        <begin position="131"/>
        <end position="146"/>
    </location>
</feature>
<feature type="region of interest" description="Disordered" evidence="3">
    <location>
        <begin position="61"/>
        <end position="80"/>
    </location>
</feature>
<feature type="modified residue" description="Valine amide" evidence="6">
    <location>
        <position position="146"/>
    </location>
</feature>
<feature type="disulfide bond" evidence="1">
    <location>
        <begin position="85"/>
        <end position="96"/>
    </location>
</feature>
<feature type="disulfide bond" evidence="1">
    <location>
        <begin position="107"/>
        <end position="124"/>
    </location>
</feature>
<feature type="disulfide bond" evidence="1">
    <location>
        <begin position="136"/>
        <end position="145"/>
    </location>
</feature>
<feature type="disulfide bond" evidence="1">
    <location>
        <begin position="138"/>
        <end position="143"/>
    </location>
</feature>
<feature type="strand" evidence="7">
    <location>
        <begin position="136"/>
        <end position="139"/>
    </location>
</feature>
<feature type="strand" evidence="7">
    <location>
        <begin position="142"/>
        <end position="145"/>
    </location>
</feature>
<comment type="function">
    <text>Microbicidal activity. Active against E.coli, Listeria monocytogenes and C.albicans, in vitro.</text>
</comment>
<comment type="subcellular location">
    <subcellularLocation>
        <location>Secreted</location>
    </subcellularLocation>
</comment>
<comment type="similarity">
    <text evidence="5">Belongs to the cathelicidin family.</text>
</comment>
<proteinExistence type="evidence at protein level"/>
<organism>
    <name type="scientific">Sus scrofa</name>
    <name type="common">Pig</name>
    <dbReference type="NCBI Taxonomy" id="9823"/>
    <lineage>
        <taxon>Eukaryota</taxon>
        <taxon>Metazoa</taxon>
        <taxon>Chordata</taxon>
        <taxon>Craniata</taxon>
        <taxon>Vertebrata</taxon>
        <taxon>Euteleostomi</taxon>
        <taxon>Mammalia</taxon>
        <taxon>Eutheria</taxon>
        <taxon>Laurasiatheria</taxon>
        <taxon>Artiodactyla</taxon>
        <taxon>Suina</taxon>
        <taxon>Suidae</taxon>
        <taxon>Sus</taxon>
    </lineage>
</organism>
<accession>P32195</accession>
<sequence>METQRASLCLGRWSLWLLLLALVVPSASAQALSYREAVLRAVDRLNEQSSEANLYRLLELDQPPKADEDPGTPKPVSFTVKETVCPRPTRQPPELCDFKENGRVKQCVGTVTLDQIKDPLDITCNEVQGVRGGRLCYCRRRFCICVG</sequence>
<gene>
    <name type="primary">NPG2</name>
</gene>
<name>PG2_PIG</name>
<evidence type="ECO:0000250" key="1"/>
<evidence type="ECO:0000255" key="2"/>
<evidence type="ECO:0000256" key="3">
    <source>
        <dbReference type="SAM" id="MobiDB-lite"/>
    </source>
</evidence>
<evidence type="ECO:0000269" key="4">
    <source>
    </source>
</evidence>
<evidence type="ECO:0000305" key="5"/>
<evidence type="ECO:0000305" key="6">
    <source>
    </source>
</evidence>
<evidence type="ECO:0007829" key="7">
    <source>
        <dbReference type="PDB" id="2MUH"/>
    </source>
</evidence>
<reference key="1">
    <citation type="journal article" date="1993" name="Biochem. Biophys. Res. Commun.">
        <title>A novel cDNA sequence encoding a pig leukocyte antimicrobial peptide with a cathelin-like pro-sequence.</title>
        <authorList>
            <person name="Storici P."/>
            <person name="Zanetti M."/>
        </authorList>
    </citation>
    <scope>NUCLEOTIDE SEQUENCE [MRNA]</scope>
    <source>
        <tissue>Bone marrow</tissue>
    </source>
</reference>
<reference key="2">
    <citation type="journal article" date="1993" name="FEBS Lett.">
        <title>Protegrins: leukocyte antimicrobial peptides that combine features of corticostatic defensins and tachyplesins.</title>
        <authorList>
            <person name="Kokryakov V.N."/>
            <person name="Harwig S.S.L."/>
            <person name="Panyutich E.A."/>
            <person name="Shevchenko A.A."/>
            <person name="Aleshina G.M."/>
            <person name="Shamova O.V."/>
            <person name="Korneva H.A."/>
            <person name="Lehrer R.I."/>
        </authorList>
    </citation>
    <scope>PROTEIN SEQUENCE OF 131-146</scope>
    <scope>AMIDATION AT VAL-146</scope>
    <source>
        <tissue>Leukocyte</tissue>
    </source>
</reference>
<protein>
    <recommendedName>
        <fullName>Protegrin-2</fullName>
        <shortName>PG-2</shortName>
    </recommendedName>
</protein>
<dbReference type="EMBL" id="L24745">
    <property type="protein sequence ID" value="AAA31061.1"/>
    <property type="molecule type" value="mRNA"/>
</dbReference>
<dbReference type="PIR" id="JN0900">
    <property type="entry name" value="JN0900"/>
</dbReference>
<dbReference type="RefSeq" id="NP_001123438.1">
    <property type="nucleotide sequence ID" value="NM_001129966.1"/>
</dbReference>
<dbReference type="PDB" id="2MUH">
    <property type="method" value="NMR"/>
    <property type="chains" value="A=131-146"/>
</dbReference>
<dbReference type="PDBsum" id="2MUH"/>
<dbReference type="BMRB" id="P32195"/>
<dbReference type="SMR" id="P32195"/>
<dbReference type="FunCoup" id="P32195">
    <property type="interactions" value="103"/>
</dbReference>
<dbReference type="PeptideAtlas" id="P32195"/>
<dbReference type="InParanoid" id="P32195"/>
<dbReference type="EvolutionaryTrace" id="P32195"/>
<dbReference type="Proteomes" id="UP000008227">
    <property type="component" value="Unplaced"/>
</dbReference>
<dbReference type="Proteomes" id="UP000314985">
    <property type="component" value="Unplaced"/>
</dbReference>
<dbReference type="Proteomes" id="UP000694570">
    <property type="component" value="Unplaced"/>
</dbReference>
<dbReference type="Proteomes" id="UP000694571">
    <property type="component" value="Unplaced"/>
</dbReference>
<dbReference type="Proteomes" id="UP000694720">
    <property type="component" value="Unplaced"/>
</dbReference>
<dbReference type="Proteomes" id="UP000694722">
    <property type="component" value="Unplaced"/>
</dbReference>
<dbReference type="Proteomes" id="UP000694723">
    <property type="component" value="Unplaced"/>
</dbReference>
<dbReference type="Proteomes" id="UP000694724">
    <property type="component" value="Unplaced"/>
</dbReference>
<dbReference type="Proteomes" id="UP000694725">
    <property type="component" value="Unplaced"/>
</dbReference>
<dbReference type="Proteomes" id="UP000694726">
    <property type="component" value="Unplaced"/>
</dbReference>
<dbReference type="Proteomes" id="UP000694727">
    <property type="component" value="Unplaced"/>
</dbReference>
<dbReference type="Proteomes" id="UP000694728">
    <property type="component" value="Unplaced"/>
</dbReference>
<dbReference type="GO" id="GO:0005615">
    <property type="term" value="C:extracellular space"/>
    <property type="evidence" value="ECO:0000318"/>
    <property type="project" value="GO_Central"/>
</dbReference>
<dbReference type="GO" id="GO:0001530">
    <property type="term" value="F:lipopolysaccharide binding"/>
    <property type="evidence" value="ECO:0000318"/>
    <property type="project" value="GO_Central"/>
</dbReference>
<dbReference type="GO" id="GO:0061844">
    <property type="term" value="P:antimicrobial humoral immune response mediated by antimicrobial peptide"/>
    <property type="evidence" value="ECO:0000318"/>
    <property type="project" value="GO_Central"/>
</dbReference>
<dbReference type="GO" id="GO:0050829">
    <property type="term" value="P:defense response to Gram-negative bacterium"/>
    <property type="evidence" value="ECO:0000318"/>
    <property type="project" value="GO_Central"/>
</dbReference>
<dbReference type="GO" id="GO:0050830">
    <property type="term" value="P:defense response to Gram-positive bacterium"/>
    <property type="evidence" value="ECO:0000318"/>
    <property type="project" value="GO_Central"/>
</dbReference>
<dbReference type="GO" id="GO:0045087">
    <property type="term" value="P:innate immune response"/>
    <property type="evidence" value="ECO:0000318"/>
    <property type="project" value="GO_Central"/>
</dbReference>
<dbReference type="FunFam" id="3.10.450.10:FF:000003">
    <property type="entry name" value="Cathelicidin antimicrobial peptide"/>
    <property type="match status" value="1"/>
</dbReference>
<dbReference type="Gene3D" id="3.10.450.10">
    <property type="match status" value="1"/>
</dbReference>
<dbReference type="InterPro" id="IPR001894">
    <property type="entry name" value="Cathelicidin-like"/>
</dbReference>
<dbReference type="InterPro" id="IPR018216">
    <property type="entry name" value="Cathelicidin_CS"/>
</dbReference>
<dbReference type="InterPro" id="IPR046350">
    <property type="entry name" value="Cystatin_sf"/>
</dbReference>
<dbReference type="PANTHER" id="PTHR10206">
    <property type="entry name" value="CATHELICIDIN"/>
    <property type="match status" value="1"/>
</dbReference>
<dbReference type="PANTHER" id="PTHR10206:SF2">
    <property type="entry name" value="CATHELICIDIN ANTIMICROBIAL PEPTIDE"/>
    <property type="match status" value="1"/>
</dbReference>
<dbReference type="Pfam" id="PF00666">
    <property type="entry name" value="Cathelicidins"/>
    <property type="match status" value="1"/>
</dbReference>
<dbReference type="SUPFAM" id="SSF54403">
    <property type="entry name" value="Cystatin/monellin"/>
    <property type="match status" value="1"/>
</dbReference>
<dbReference type="PROSITE" id="PS00946">
    <property type="entry name" value="CATHELICIDINS_1"/>
    <property type="match status" value="1"/>
</dbReference>
<dbReference type="PROSITE" id="PS00947">
    <property type="entry name" value="CATHELICIDINS_2"/>
    <property type="match status" value="1"/>
</dbReference>